<comment type="function">
    <text evidence="1">Involved in transcription antitermination. Required for transcription of ribosomal RNA (rRNA) genes. Binds specifically to the boxA antiterminator sequence of the ribosomal RNA (rrn) operons.</text>
</comment>
<comment type="similarity">
    <text evidence="1">Belongs to the NusB family.</text>
</comment>
<feature type="chain" id="PRO_1000023775" description="Transcription antitermination protein NusB">
    <location>
        <begin position="1"/>
        <end position="134"/>
    </location>
</feature>
<evidence type="ECO:0000255" key="1">
    <source>
        <dbReference type="HAMAP-Rule" id="MF_00073"/>
    </source>
</evidence>
<reference key="1">
    <citation type="submission" date="2006-12" db="EMBL/GenBank/DDBJ databases">
        <title>Complete sequence of Shewanella sp. W3-18-1.</title>
        <authorList>
            <consortium name="US DOE Joint Genome Institute"/>
            <person name="Copeland A."/>
            <person name="Lucas S."/>
            <person name="Lapidus A."/>
            <person name="Barry K."/>
            <person name="Detter J.C."/>
            <person name="Glavina del Rio T."/>
            <person name="Hammon N."/>
            <person name="Israni S."/>
            <person name="Dalin E."/>
            <person name="Tice H."/>
            <person name="Pitluck S."/>
            <person name="Chain P."/>
            <person name="Malfatti S."/>
            <person name="Shin M."/>
            <person name="Vergez L."/>
            <person name="Schmutz J."/>
            <person name="Larimer F."/>
            <person name="Land M."/>
            <person name="Hauser L."/>
            <person name="Kyrpides N."/>
            <person name="Lykidis A."/>
            <person name="Tiedje J."/>
            <person name="Richardson P."/>
        </authorList>
    </citation>
    <scope>NUCLEOTIDE SEQUENCE [LARGE SCALE GENOMIC DNA]</scope>
    <source>
        <strain>W3-18-1</strain>
    </source>
</reference>
<accession>A1RHD6</accession>
<sequence>MKPSERRKARRLAVQAIYSWQLSGNNIADVEHEFLTEQSLDGVDVAYFRELFSGVATKKPQLDELIIPHLERPIDEVSPVEKAIVRLATYELTFRKDVPYKVAINEAIELAKAFGADESHKFVNGLLDKLVARK</sequence>
<proteinExistence type="inferred from homology"/>
<protein>
    <recommendedName>
        <fullName evidence="1">Transcription antitermination protein NusB</fullName>
    </recommendedName>
    <alternativeName>
        <fullName evidence="1">Antitermination factor NusB</fullName>
    </alternativeName>
</protein>
<keyword id="KW-0694">RNA-binding</keyword>
<keyword id="KW-0804">Transcription</keyword>
<keyword id="KW-0889">Transcription antitermination</keyword>
<keyword id="KW-0805">Transcription regulation</keyword>
<gene>
    <name evidence="1" type="primary">nusB</name>
    <name type="ordered locus">Sputw3181_1238</name>
</gene>
<organism>
    <name type="scientific">Shewanella sp. (strain W3-18-1)</name>
    <dbReference type="NCBI Taxonomy" id="351745"/>
    <lineage>
        <taxon>Bacteria</taxon>
        <taxon>Pseudomonadati</taxon>
        <taxon>Pseudomonadota</taxon>
        <taxon>Gammaproteobacteria</taxon>
        <taxon>Alteromonadales</taxon>
        <taxon>Shewanellaceae</taxon>
        <taxon>Shewanella</taxon>
    </lineage>
</organism>
<dbReference type="EMBL" id="CP000503">
    <property type="protein sequence ID" value="ABM24081.1"/>
    <property type="molecule type" value="Genomic_DNA"/>
</dbReference>
<dbReference type="RefSeq" id="WP_011788588.1">
    <property type="nucleotide sequence ID" value="NC_008750.1"/>
</dbReference>
<dbReference type="SMR" id="A1RHD6"/>
<dbReference type="KEGG" id="shw:Sputw3181_1238"/>
<dbReference type="HOGENOM" id="CLU_087843_4_1_6"/>
<dbReference type="Proteomes" id="UP000002597">
    <property type="component" value="Chromosome"/>
</dbReference>
<dbReference type="GO" id="GO:0005829">
    <property type="term" value="C:cytosol"/>
    <property type="evidence" value="ECO:0007669"/>
    <property type="project" value="TreeGrafter"/>
</dbReference>
<dbReference type="GO" id="GO:0003723">
    <property type="term" value="F:RNA binding"/>
    <property type="evidence" value="ECO:0007669"/>
    <property type="project" value="UniProtKB-UniRule"/>
</dbReference>
<dbReference type="GO" id="GO:0006353">
    <property type="term" value="P:DNA-templated transcription termination"/>
    <property type="evidence" value="ECO:0007669"/>
    <property type="project" value="UniProtKB-UniRule"/>
</dbReference>
<dbReference type="GO" id="GO:0031564">
    <property type="term" value="P:transcription antitermination"/>
    <property type="evidence" value="ECO:0007669"/>
    <property type="project" value="UniProtKB-KW"/>
</dbReference>
<dbReference type="CDD" id="cd00619">
    <property type="entry name" value="Terminator_NusB"/>
    <property type="match status" value="1"/>
</dbReference>
<dbReference type="FunFam" id="1.10.940.10:FF:000001">
    <property type="entry name" value="Transcription antitermination factor NusB"/>
    <property type="match status" value="1"/>
</dbReference>
<dbReference type="Gene3D" id="1.10.940.10">
    <property type="entry name" value="NusB-like"/>
    <property type="match status" value="1"/>
</dbReference>
<dbReference type="HAMAP" id="MF_00073">
    <property type="entry name" value="NusB"/>
    <property type="match status" value="1"/>
</dbReference>
<dbReference type="InterPro" id="IPR035926">
    <property type="entry name" value="NusB-like_sf"/>
</dbReference>
<dbReference type="InterPro" id="IPR011605">
    <property type="entry name" value="NusB_fam"/>
</dbReference>
<dbReference type="InterPro" id="IPR006027">
    <property type="entry name" value="NusB_RsmB_TIM44"/>
</dbReference>
<dbReference type="NCBIfam" id="TIGR01951">
    <property type="entry name" value="nusB"/>
    <property type="match status" value="1"/>
</dbReference>
<dbReference type="PANTHER" id="PTHR11078:SF3">
    <property type="entry name" value="ANTITERMINATION NUSB DOMAIN-CONTAINING PROTEIN"/>
    <property type="match status" value="1"/>
</dbReference>
<dbReference type="PANTHER" id="PTHR11078">
    <property type="entry name" value="N UTILIZATION SUBSTANCE PROTEIN B-RELATED"/>
    <property type="match status" value="1"/>
</dbReference>
<dbReference type="Pfam" id="PF01029">
    <property type="entry name" value="NusB"/>
    <property type="match status" value="1"/>
</dbReference>
<dbReference type="SUPFAM" id="SSF48013">
    <property type="entry name" value="NusB-like"/>
    <property type="match status" value="1"/>
</dbReference>
<name>NUSB_SHESW</name>